<accession>P04251</accession>
<protein>
    <recommendedName>
        <fullName>Globin-1 subunit beta</fullName>
        <shortName>Globin I beta chain</shortName>
    </recommendedName>
</protein>
<comment type="subunit">
    <text>Heterotetramer of two alpha chains and two beta chains.</text>
</comment>
<comment type="similarity">
    <text evidence="1">Belongs to the globin family.</text>
</comment>
<reference key="1">
    <citation type="journal article" date="1994" name="J. Mol. Evol.">
        <title>The organization of the beta-globin gene of the bivalve mollusc Anadara trapezia and its evolutionary relationship to other invertebrate and vertebrate globin genes.</title>
        <authorList>
            <person name="Nassif N.T."/>
            <person name="Glenn W.K."/>
            <person name="Mackinlay A.G."/>
        </authorList>
    </citation>
    <scope>NUCLEOTIDE SEQUENCE [GENOMIC DNA]</scope>
    <source>
        <tissue>Blood</tissue>
    </source>
</reference>
<reference key="2">
    <citation type="journal article" date="1985" name="Aust. J. Biol. Sci.">
        <title>Amino acid sequence of the beta-chain of the tetrameric haemoglobin of the bivalve mollusc, Anadara trapezia.</title>
        <authorList>
            <person name="Gilbert A.T."/>
            <person name="Thompson E.O.P."/>
        </authorList>
    </citation>
    <scope>PROTEIN SEQUENCE OF 2-152</scope>
    <scope>ACETYLATION AT SER-2</scope>
</reference>
<organism>
    <name type="scientific">Anadara trapezia</name>
    <name type="common">Sydney cockle</name>
    <name type="synonym">Arca trapezia</name>
    <dbReference type="NCBI Taxonomy" id="6556"/>
    <lineage>
        <taxon>Eukaryota</taxon>
        <taxon>Metazoa</taxon>
        <taxon>Spiralia</taxon>
        <taxon>Lophotrochozoa</taxon>
        <taxon>Mollusca</taxon>
        <taxon>Bivalvia</taxon>
        <taxon>Autobranchia</taxon>
        <taxon>Pteriomorphia</taxon>
        <taxon>Arcoida</taxon>
        <taxon>Arcoidea</taxon>
        <taxon>Arcidae</taxon>
        <taxon>Anadara</taxon>
    </lineage>
</organism>
<name>GLB1B_ANATR</name>
<proteinExistence type="evidence at protein level"/>
<feature type="initiator methionine" description="Removed" evidence="2">
    <location>
        <position position="1"/>
    </location>
</feature>
<feature type="chain" id="PRO_0000052485" description="Globin-1 subunit beta">
    <location>
        <begin position="2"/>
        <end position="152"/>
    </location>
</feature>
<feature type="domain" description="Globin" evidence="1">
    <location>
        <begin position="12"/>
        <end position="152"/>
    </location>
</feature>
<feature type="binding site" description="distal binding residue" evidence="1">
    <location>
        <position position="72"/>
    </location>
    <ligand>
        <name>heme b</name>
        <dbReference type="ChEBI" id="CHEBI:60344"/>
    </ligand>
    <ligandPart>
        <name>Fe</name>
        <dbReference type="ChEBI" id="CHEBI:18248"/>
    </ligandPart>
</feature>
<feature type="binding site" description="proximal binding residue" evidence="1">
    <location>
        <position position="104"/>
    </location>
    <ligand>
        <name>heme b</name>
        <dbReference type="ChEBI" id="CHEBI:60344"/>
    </ligand>
    <ligandPart>
        <name>Fe</name>
        <dbReference type="ChEBI" id="CHEBI:18248"/>
    </ligandPart>
</feature>
<feature type="modified residue" description="N-acetylserine" evidence="2">
    <location>
        <position position="2"/>
    </location>
</feature>
<feature type="sequence conflict" description="In Ref. 2; AA sequence." evidence="3" ref="2">
    <original>S</original>
    <variation>A</variation>
    <location>
        <position position="143"/>
    </location>
</feature>
<feature type="sequence conflict" description="In Ref. 2; AA sequence." evidence="3" ref="2">
    <original>A</original>
    <variation>S</variation>
    <location>
        <position position="151"/>
    </location>
</feature>
<dbReference type="EMBL" id="L16978">
    <property type="protein sequence ID" value="AAA62149.1"/>
    <property type="molecule type" value="Genomic_DNA"/>
</dbReference>
<dbReference type="PIR" id="A02533">
    <property type="entry name" value="GGNKT"/>
</dbReference>
<dbReference type="SMR" id="P04251"/>
<dbReference type="iPTMnet" id="P04251"/>
<dbReference type="GO" id="GO:0020037">
    <property type="term" value="F:heme binding"/>
    <property type="evidence" value="ECO:0007669"/>
    <property type="project" value="InterPro"/>
</dbReference>
<dbReference type="GO" id="GO:0046872">
    <property type="term" value="F:metal ion binding"/>
    <property type="evidence" value="ECO:0007669"/>
    <property type="project" value="UniProtKB-KW"/>
</dbReference>
<dbReference type="GO" id="GO:0019825">
    <property type="term" value="F:oxygen binding"/>
    <property type="evidence" value="ECO:0007669"/>
    <property type="project" value="InterPro"/>
</dbReference>
<dbReference type="GO" id="GO:0005344">
    <property type="term" value="F:oxygen carrier activity"/>
    <property type="evidence" value="ECO:0007669"/>
    <property type="project" value="UniProtKB-KW"/>
</dbReference>
<dbReference type="CDD" id="cd01040">
    <property type="entry name" value="Mb-like"/>
    <property type="match status" value="1"/>
</dbReference>
<dbReference type="Gene3D" id="1.10.490.10">
    <property type="entry name" value="Globins"/>
    <property type="match status" value="1"/>
</dbReference>
<dbReference type="InterPro" id="IPR000971">
    <property type="entry name" value="Globin"/>
</dbReference>
<dbReference type="InterPro" id="IPR050532">
    <property type="entry name" value="Globin-like_OT"/>
</dbReference>
<dbReference type="InterPro" id="IPR009050">
    <property type="entry name" value="Globin-like_sf"/>
</dbReference>
<dbReference type="InterPro" id="IPR012292">
    <property type="entry name" value="Globin/Proto"/>
</dbReference>
<dbReference type="InterPro" id="IPR044399">
    <property type="entry name" value="Mb-like_M"/>
</dbReference>
<dbReference type="PANTHER" id="PTHR46458">
    <property type="entry name" value="BLR2807 PROTEIN"/>
    <property type="match status" value="1"/>
</dbReference>
<dbReference type="PANTHER" id="PTHR46458:SF1">
    <property type="entry name" value="GEO09476P1"/>
    <property type="match status" value="1"/>
</dbReference>
<dbReference type="Pfam" id="PF00042">
    <property type="entry name" value="Globin"/>
    <property type="match status" value="1"/>
</dbReference>
<dbReference type="SUPFAM" id="SSF46458">
    <property type="entry name" value="Globin-like"/>
    <property type="match status" value="1"/>
</dbReference>
<dbReference type="PROSITE" id="PS01033">
    <property type="entry name" value="GLOBIN"/>
    <property type="match status" value="1"/>
</dbReference>
<sequence length="152" mass="16524">MSTVAELANAVVSNADQKDLLRLSWGVLSVDMEGTGLMLMANLFKTSSAARTKFARLGDVSAGKDNSKLRGHSITLMYALQNFIDALDNVDRLKCVVEKFAVNHINRQISADEFGEIVGPLRQTLKARMGSYFDEDTVSAWASLVAVVQAAL</sequence>
<evidence type="ECO:0000255" key="1">
    <source>
        <dbReference type="PROSITE-ProRule" id="PRU00238"/>
    </source>
</evidence>
<evidence type="ECO:0000269" key="2">
    <source>
    </source>
</evidence>
<evidence type="ECO:0000305" key="3"/>
<keyword id="KW-0007">Acetylation</keyword>
<keyword id="KW-0903">Direct protein sequencing</keyword>
<keyword id="KW-0349">Heme</keyword>
<keyword id="KW-0408">Iron</keyword>
<keyword id="KW-0479">Metal-binding</keyword>
<keyword id="KW-0561">Oxygen transport</keyword>
<keyword id="KW-0813">Transport</keyword>